<accession>B4TK04</accession>
<feature type="chain" id="PRO_1000097102" description="Pantothenate synthetase">
    <location>
        <begin position="1"/>
        <end position="284"/>
    </location>
</feature>
<feature type="active site" description="Proton donor" evidence="1">
    <location>
        <position position="37"/>
    </location>
</feature>
<feature type="binding site" evidence="1">
    <location>
        <begin position="30"/>
        <end position="37"/>
    </location>
    <ligand>
        <name>ATP</name>
        <dbReference type="ChEBI" id="CHEBI:30616"/>
    </ligand>
</feature>
<feature type="binding site" evidence="1">
    <location>
        <position position="61"/>
    </location>
    <ligand>
        <name>(R)-pantoate</name>
        <dbReference type="ChEBI" id="CHEBI:15980"/>
    </ligand>
</feature>
<feature type="binding site" evidence="1">
    <location>
        <position position="61"/>
    </location>
    <ligand>
        <name>beta-alanine</name>
        <dbReference type="ChEBI" id="CHEBI:57966"/>
    </ligand>
</feature>
<feature type="binding site" evidence="1">
    <location>
        <begin position="149"/>
        <end position="152"/>
    </location>
    <ligand>
        <name>ATP</name>
        <dbReference type="ChEBI" id="CHEBI:30616"/>
    </ligand>
</feature>
<feature type="binding site" evidence="1">
    <location>
        <position position="155"/>
    </location>
    <ligand>
        <name>(R)-pantoate</name>
        <dbReference type="ChEBI" id="CHEBI:15980"/>
    </ligand>
</feature>
<feature type="binding site" evidence="1">
    <location>
        <position position="178"/>
    </location>
    <ligand>
        <name>ATP</name>
        <dbReference type="ChEBI" id="CHEBI:30616"/>
    </ligand>
</feature>
<feature type="binding site" evidence="1">
    <location>
        <begin position="186"/>
        <end position="189"/>
    </location>
    <ligand>
        <name>ATP</name>
        <dbReference type="ChEBI" id="CHEBI:30616"/>
    </ligand>
</feature>
<evidence type="ECO:0000255" key="1">
    <source>
        <dbReference type="HAMAP-Rule" id="MF_00158"/>
    </source>
</evidence>
<reference key="1">
    <citation type="journal article" date="2011" name="J. Bacteriol.">
        <title>Comparative genomics of 28 Salmonella enterica isolates: evidence for CRISPR-mediated adaptive sublineage evolution.</title>
        <authorList>
            <person name="Fricke W.F."/>
            <person name="Mammel M.K."/>
            <person name="McDermott P.F."/>
            <person name="Tartera C."/>
            <person name="White D.G."/>
            <person name="Leclerc J.E."/>
            <person name="Ravel J."/>
            <person name="Cebula T.A."/>
        </authorList>
    </citation>
    <scope>NUCLEOTIDE SEQUENCE [LARGE SCALE GENOMIC DNA]</scope>
    <source>
        <strain>SL476</strain>
    </source>
</reference>
<dbReference type="EC" id="6.3.2.1" evidence="1"/>
<dbReference type="EMBL" id="CP001120">
    <property type="protein sequence ID" value="ACF67832.1"/>
    <property type="molecule type" value="Genomic_DNA"/>
</dbReference>
<dbReference type="RefSeq" id="WP_000905345.1">
    <property type="nucleotide sequence ID" value="NC_011083.1"/>
</dbReference>
<dbReference type="SMR" id="B4TK04"/>
<dbReference type="KEGG" id="seh:SeHA_C0213"/>
<dbReference type="HOGENOM" id="CLU_047148_0_0_6"/>
<dbReference type="UniPathway" id="UPA00028">
    <property type="reaction ID" value="UER00005"/>
</dbReference>
<dbReference type="Proteomes" id="UP000001866">
    <property type="component" value="Chromosome"/>
</dbReference>
<dbReference type="GO" id="GO:0005829">
    <property type="term" value="C:cytosol"/>
    <property type="evidence" value="ECO:0007669"/>
    <property type="project" value="TreeGrafter"/>
</dbReference>
<dbReference type="GO" id="GO:0005524">
    <property type="term" value="F:ATP binding"/>
    <property type="evidence" value="ECO:0007669"/>
    <property type="project" value="UniProtKB-KW"/>
</dbReference>
<dbReference type="GO" id="GO:0004592">
    <property type="term" value="F:pantoate-beta-alanine ligase activity"/>
    <property type="evidence" value="ECO:0007669"/>
    <property type="project" value="UniProtKB-UniRule"/>
</dbReference>
<dbReference type="GO" id="GO:0015940">
    <property type="term" value="P:pantothenate biosynthetic process"/>
    <property type="evidence" value="ECO:0007669"/>
    <property type="project" value="UniProtKB-UniRule"/>
</dbReference>
<dbReference type="CDD" id="cd00560">
    <property type="entry name" value="PanC"/>
    <property type="match status" value="1"/>
</dbReference>
<dbReference type="FunFam" id="3.30.1300.10:FF:000001">
    <property type="entry name" value="Pantothenate synthetase"/>
    <property type="match status" value="1"/>
</dbReference>
<dbReference type="FunFam" id="3.40.50.620:FF:000013">
    <property type="entry name" value="Pantothenate synthetase"/>
    <property type="match status" value="1"/>
</dbReference>
<dbReference type="Gene3D" id="3.40.50.620">
    <property type="entry name" value="HUPs"/>
    <property type="match status" value="1"/>
</dbReference>
<dbReference type="Gene3D" id="3.30.1300.10">
    <property type="entry name" value="Pantoate-beta-alanine ligase, C-terminal domain"/>
    <property type="match status" value="1"/>
</dbReference>
<dbReference type="HAMAP" id="MF_00158">
    <property type="entry name" value="PanC"/>
    <property type="match status" value="1"/>
</dbReference>
<dbReference type="InterPro" id="IPR004821">
    <property type="entry name" value="Cyt_trans-like"/>
</dbReference>
<dbReference type="InterPro" id="IPR003721">
    <property type="entry name" value="Pantoate_ligase"/>
</dbReference>
<dbReference type="InterPro" id="IPR042176">
    <property type="entry name" value="Pantoate_ligase_C"/>
</dbReference>
<dbReference type="InterPro" id="IPR014729">
    <property type="entry name" value="Rossmann-like_a/b/a_fold"/>
</dbReference>
<dbReference type="NCBIfam" id="TIGR00125">
    <property type="entry name" value="cyt_tran_rel"/>
    <property type="match status" value="1"/>
</dbReference>
<dbReference type="NCBIfam" id="TIGR00018">
    <property type="entry name" value="panC"/>
    <property type="match status" value="1"/>
</dbReference>
<dbReference type="PANTHER" id="PTHR21299">
    <property type="entry name" value="CYTIDYLATE KINASE/PANTOATE-BETA-ALANINE LIGASE"/>
    <property type="match status" value="1"/>
</dbReference>
<dbReference type="PANTHER" id="PTHR21299:SF1">
    <property type="entry name" value="PANTOATE--BETA-ALANINE LIGASE"/>
    <property type="match status" value="1"/>
</dbReference>
<dbReference type="Pfam" id="PF02569">
    <property type="entry name" value="Pantoate_ligase"/>
    <property type="match status" value="1"/>
</dbReference>
<dbReference type="SUPFAM" id="SSF52374">
    <property type="entry name" value="Nucleotidylyl transferase"/>
    <property type="match status" value="1"/>
</dbReference>
<name>PANC_SALHS</name>
<proteinExistence type="inferred from homology"/>
<protein>
    <recommendedName>
        <fullName evidence="1">Pantothenate synthetase</fullName>
        <shortName evidence="1">PS</shortName>
        <ecNumber evidence="1">6.3.2.1</ecNumber>
    </recommendedName>
    <alternativeName>
        <fullName evidence="1">Pantoate--beta-alanine ligase</fullName>
    </alternativeName>
    <alternativeName>
        <fullName evidence="1">Pantoate-activating enzyme</fullName>
    </alternativeName>
</protein>
<organism>
    <name type="scientific">Salmonella heidelberg (strain SL476)</name>
    <dbReference type="NCBI Taxonomy" id="454169"/>
    <lineage>
        <taxon>Bacteria</taxon>
        <taxon>Pseudomonadati</taxon>
        <taxon>Pseudomonadota</taxon>
        <taxon>Gammaproteobacteria</taxon>
        <taxon>Enterobacterales</taxon>
        <taxon>Enterobacteriaceae</taxon>
        <taxon>Salmonella</taxon>
    </lineage>
</organism>
<sequence length="284" mass="31873">MLIIETLPLLRQHIRRLRQEGKRVALVPTMGNLHDGHMKLVDEAKARADVVIVSIFVNPMQFDRPDDLVRYPRTLQEDCEKLNKRKVDYVFAPAVEEIYPHGLEGQTYVDVPGLSTMLEGASRPGHFRGVSTIVSKLFNLIQPDIACFGEKDFQQLALIRKMVADMSYDIEIVGVPIIRAKDGLALSSRNAYLTAEQRKIAPGLYNVMNSIAEKLIAGNRELQEIIAIAEQELNEKGFRADDIQIRDADTLQELTETSKRAVILAAAWLGQARLIDNQSVTLAQ</sequence>
<gene>
    <name evidence="1" type="primary">panC</name>
    <name type="ordered locus">SeHA_C0213</name>
</gene>
<keyword id="KW-0067">ATP-binding</keyword>
<keyword id="KW-0963">Cytoplasm</keyword>
<keyword id="KW-0436">Ligase</keyword>
<keyword id="KW-0547">Nucleotide-binding</keyword>
<keyword id="KW-0566">Pantothenate biosynthesis</keyword>
<comment type="function">
    <text evidence="1">Catalyzes the condensation of pantoate with beta-alanine in an ATP-dependent reaction via a pantoyl-adenylate intermediate.</text>
</comment>
<comment type="catalytic activity">
    <reaction evidence="1">
        <text>(R)-pantoate + beta-alanine + ATP = (R)-pantothenate + AMP + diphosphate + H(+)</text>
        <dbReference type="Rhea" id="RHEA:10912"/>
        <dbReference type="ChEBI" id="CHEBI:15378"/>
        <dbReference type="ChEBI" id="CHEBI:15980"/>
        <dbReference type="ChEBI" id="CHEBI:29032"/>
        <dbReference type="ChEBI" id="CHEBI:30616"/>
        <dbReference type="ChEBI" id="CHEBI:33019"/>
        <dbReference type="ChEBI" id="CHEBI:57966"/>
        <dbReference type="ChEBI" id="CHEBI:456215"/>
        <dbReference type="EC" id="6.3.2.1"/>
    </reaction>
</comment>
<comment type="pathway">
    <text evidence="1">Cofactor biosynthesis; (R)-pantothenate biosynthesis; (R)-pantothenate from (R)-pantoate and beta-alanine: step 1/1.</text>
</comment>
<comment type="subunit">
    <text evidence="1">Homodimer.</text>
</comment>
<comment type="subcellular location">
    <subcellularLocation>
        <location evidence="1">Cytoplasm</location>
    </subcellularLocation>
</comment>
<comment type="miscellaneous">
    <text evidence="1">The reaction proceeds by a bi uni uni bi ping pong mechanism.</text>
</comment>
<comment type="similarity">
    <text evidence="1">Belongs to the pantothenate synthetase family.</text>
</comment>